<accession>Q7MMY2</accession>
<name>KDSA_VIBVY</name>
<feature type="chain" id="PRO_0000187171" description="2-dehydro-3-deoxyphosphooctonate aldolase">
    <location>
        <begin position="1"/>
        <end position="284"/>
    </location>
</feature>
<comment type="catalytic activity">
    <reaction evidence="1">
        <text>D-arabinose 5-phosphate + phosphoenolpyruvate + H2O = 3-deoxy-alpha-D-manno-2-octulosonate-8-phosphate + phosphate</text>
        <dbReference type="Rhea" id="RHEA:14053"/>
        <dbReference type="ChEBI" id="CHEBI:15377"/>
        <dbReference type="ChEBI" id="CHEBI:43474"/>
        <dbReference type="ChEBI" id="CHEBI:57693"/>
        <dbReference type="ChEBI" id="CHEBI:58702"/>
        <dbReference type="ChEBI" id="CHEBI:85985"/>
        <dbReference type="EC" id="2.5.1.55"/>
    </reaction>
</comment>
<comment type="pathway">
    <text evidence="1">Carbohydrate biosynthesis; 3-deoxy-D-manno-octulosonate biosynthesis; 3-deoxy-D-manno-octulosonate from D-ribulose 5-phosphate: step 2/3.</text>
</comment>
<comment type="pathway">
    <text evidence="1">Bacterial outer membrane biogenesis; lipopolysaccharide biosynthesis.</text>
</comment>
<comment type="subcellular location">
    <subcellularLocation>
        <location evidence="1">Cytoplasm</location>
    </subcellularLocation>
</comment>
<comment type="similarity">
    <text evidence="1">Belongs to the KdsA family.</text>
</comment>
<comment type="sequence caution" evidence="2">
    <conflict type="erroneous initiation">
        <sequence resource="EMBL-CDS" id="BAC93699"/>
    </conflict>
</comment>
<organism>
    <name type="scientific">Vibrio vulnificus (strain YJ016)</name>
    <dbReference type="NCBI Taxonomy" id="196600"/>
    <lineage>
        <taxon>Bacteria</taxon>
        <taxon>Pseudomonadati</taxon>
        <taxon>Pseudomonadota</taxon>
        <taxon>Gammaproteobacteria</taxon>
        <taxon>Vibrionales</taxon>
        <taxon>Vibrionaceae</taxon>
        <taxon>Vibrio</taxon>
    </lineage>
</organism>
<dbReference type="EC" id="2.5.1.55" evidence="1"/>
<dbReference type="EMBL" id="BA000037">
    <property type="protein sequence ID" value="BAC93699.1"/>
    <property type="status" value="ALT_INIT"/>
    <property type="molecule type" value="Genomic_DNA"/>
</dbReference>
<dbReference type="SMR" id="Q7MMY2"/>
<dbReference type="STRING" id="672.VV93_v1c08660"/>
<dbReference type="KEGG" id="vvy:VV0935"/>
<dbReference type="eggNOG" id="COG2877">
    <property type="taxonomic scope" value="Bacteria"/>
</dbReference>
<dbReference type="HOGENOM" id="CLU_036666_0_0_6"/>
<dbReference type="UniPathway" id="UPA00030"/>
<dbReference type="UniPathway" id="UPA00357">
    <property type="reaction ID" value="UER00474"/>
</dbReference>
<dbReference type="Proteomes" id="UP000002675">
    <property type="component" value="Chromosome I"/>
</dbReference>
<dbReference type="GO" id="GO:0005737">
    <property type="term" value="C:cytoplasm"/>
    <property type="evidence" value="ECO:0007669"/>
    <property type="project" value="UniProtKB-SubCell"/>
</dbReference>
<dbReference type="GO" id="GO:0008676">
    <property type="term" value="F:3-deoxy-8-phosphooctulonate synthase activity"/>
    <property type="evidence" value="ECO:0007669"/>
    <property type="project" value="UniProtKB-UniRule"/>
</dbReference>
<dbReference type="GO" id="GO:0019294">
    <property type="term" value="P:keto-3-deoxy-D-manno-octulosonic acid biosynthetic process"/>
    <property type="evidence" value="ECO:0007669"/>
    <property type="project" value="UniProtKB-UniRule"/>
</dbReference>
<dbReference type="FunFam" id="3.20.20.70:FF:000058">
    <property type="entry name" value="2-dehydro-3-deoxyphosphooctonate aldolase"/>
    <property type="match status" value="1"/>
</dbReference>
<dbReference type="Gene3D" id="3.20.20.70">
    <property type="entry name" value="Aldolase class I"/>
    <property type="match status" value="1"/>
</dbReference>
<dbReference type="HAMAP" id="MF_00056">
    <property type="entry name" value="KDO8P_synth"/>
    <property type="match status" value="1"/>
</dbReference>
<dbReference type="InterPro" id="IPR013785">
    <property type="entry name" value="Aldolase_TIM"/>
</dbReference>
<dbReference type="InterPro" id="IPR006218">
    <property type="entry name" value="DAHP1/KDSA"/>
</dbReference>
<dbReference type="InterPro" id="IPR006269">
    <property type="entry name" value="KDO8P_synthase"/>
</dbReference>
<dbReference type="NCBIfam" id="TIGR01362">
    <property type="entry name" value="KDO8P_synth"/>
    <property type="match status" value="1"/>
</dbReference>
<dbReference type="NCBIfam" id="NF003543">
    <property type="entry name" value="PRK05198.1"/>
    <property type="match status" value="1"/>
</dbReference>
<dbReference type="NCBIfam" id="NF009109">
    <property type="entry name" value="PRK12457.1"/>
    <property type="match status" value="1"/>
</dbReference>
<dbReference type="PANTHER" id="PTHR21057">
    <property type="entry name" value="PHOSPHO-2-DEHYDRO-3-DEOXYHEPTONATE ALDOLASE"/>
    <property type="match status" value="1"/>
</dbReference>
<dbReference type="Pfam" id="PF00793">
    <property type="entry name" value="DAHP_synth_1"/>
    <property type="match status" value="1"/>
</dbReference>
<dbReference type="SUPFAM" id="SSF51569">
    <property type="entry name" value="Aldolase"/>
    <property type="match status" value="1"/>
</dbReference>
<evidence type="ECO:0000255" key="1">
    <source>
        <dbReference type="HAMAP-Rule" id="MF_00056"/>
    </source>
</evidence>
<evidence type="ECO:0000305" key="2"/>
<sequence length="284" mass="30851">MMEQKIVQIGDIPVANDKPFTLFAGMNVLESRDLAMQICEHYVKVTDKLGIPYVFKASFDKANRSSVHSYRGPGLEEGMKIFQELKDTFGVKIITDVHTEAQAQPVADVVDVIQLPAFLARQTDLVEAMAKTGAVINVKKPQFMSPGQVGNIVEKFAECGNDKIILCERGSCHGYDNLVVDMLGFGVMKKASKGSPIIFDVTHSLQMRDPSGAASGGRREQTVELAKAGLATGIAGLFIEAHPNPDQARCDGPSALPLDKLEPFLAQMKALDDLVKSFASIDIR</sequence>
<protein>
    <recommendedName>
        <fullName evidence="1">2-dehydro-3-deoxyphosphooctonate aldolase</fullName>
        <ecNumber evidence="1">2.5.1.55</ecNumber>
    </recommendedName>
    <alternativeName>
        <fullName evidence="1">3-deoxy-D-manno-octulosonic acid 8-phosphate synthase</fullName>
    </alternativeName>
    <alternativeName>
        <fullName evidence="1">KDO-8-phosphate synthase</fullName>
        <shortName evidence="1">KDO 8-P synthase</shortName>
        <shortName evidence="1">KDOPS</shortName>
    </alternativeName>
    <alternativeName>
        <fullName evidence="1">Phospho-2-dehydro-3-deoxyoctonate aldolase</fullName>
    </alternativeName>
</protein>
<reference key="1">
    <citation type="journal article" date="2003" name="Genome Res.">
        <title>Comparative genome analysis of Vibrio vulnificus, a marine pathogen.</title>
        <authorList>
            <person name="Chen C.-Y."/>
            <person name="Wu K.-M."/>
            <person name="Chang Y.-C."/>
            <person name="Chang C.-H."/>
            <person name="Tsai H.-C."/>
            <person name="Liao T.-L."/>
            <person name="Liu Y.-M."/>
            <person name="Chen H.-J."/>
            <person name="Shen A.B.-T."/>
            <person name="Li J.-C."/>
            <person name="Su T.-L."/>
            <person name="Shao C.-P."/>
            <person name="Lee C.-T."/>
            <person name="Hor L.-I."/>
            <person name="Tsai S.-F."/>
        </authorList>
    </citation>
    <scope>NUCLEOTIDE SEQUENCE [LARGE SCALE GENOMIC DNA]</scope>
    <source>
        <strain>YJ016</strain>
    </source>
</reference>
<proteinExistence type="inferred from homology"/>
<gene>
    <name evidence="1" type="primary">kdsA</name>
    <name type="ordered locus">VV0935</name>
</gene>
<keyword id="KW-0963">Cytoplasm</keyword>
<keyword id="KW-0448">Lipopolysaccharide biosynthesis</keyword>
<keyword id="KW-0808">Transferase</keyword>